<name>PDXY_PSEPW</name>
<evidence type="ECO:0000255" key="1">
    <source>
        <dbReference type="HAMAP-Rule" id="MF_01639"/>
    </source>
</evidence>
<dbReference type="EC" id="2.7.1.35" evidence="1"/>
<dbReference type="EMBL" id="CP000949">
    <property type="protein sequence ID" value="ACA75611.1"/>
    <property type="molecule type" value="Genomic_DNA"/>
</dbReference>
<dbReference type="SMR" id="B1JFM7"/>
<dbReference type="STRING" id="390235.PputW619_5135"/>
<dbReference type="KEGG" id="ppw:PputW619_5135"/>
<dbReference type="eggNOG" id="COG2240">
    <property type="taxonomic scope" value="Bacteria"/>
</dbReference>
<dbReference type="HOGENOM" id="CLU_046496_3_0_6"/>
<dbReference type="OrthoDB" id="9800808at2"/>
<dbReference type="UniPathway" id="UPA01068">
    <property type="reaction ID" value="UER00298"/>
</dbReference>
<dbReference type="GO" id="GO:0005829">
    <property type="term" value="C:cytosol"/>
    <property type="evidence" value="ECO:0007669"/>
    <property type="project" value="TreeGrafter"/>
</dbReference>
<dbReference type="GO" id="GO:0005524">
    <property type="term" value="F:ATP binding"/>
    <property type="evidence" value="ECO:0007669"/>
    <property type="project" value="UniProtKB-UniRule"/>
</dbReference>
<dbReference type="GO" id="GO:0000287">
    <property type="term" value="F:magnesium ion binding"/>
    <property type="evidence" value="ECO:0007669"/>
    <property type="project" value="UniProtKB-UniRule"/>
</dbReference>
<dbReference type="GO" id="GO:0008478">
    <property type="term" value="F:pyridoxal kinase activity"/>
    <property type="evidence" value="ECO:0007669"/>
    <property type="project" value="UniProtKB-UniRule"/>
</dbReference>
<dbReference type="GO" id="GO:0009443">
    <property type="term" value="P:pyridoxal 5'-phosphate salvage"/>
    <property type="evidence" value="ECO:0007669"/>
    <property type="project" value="UniProtKB-UniRule"/>
</dbReference>
<dbReference type="CDD" id="cd01173">
    <property type="entry name" value="pyridoxal_pyridoxamine_kinase"/>
    <property type="match status" value="1"/>
</dbReference>
<dbReference type="FunFam" id="3.40.1190.20:FF:000008">
    <property type="entry name" value="Pyridoxal kinase PdxY"/>
    <property type="match status" value="1"/>
</dbReference>
<dbReference type="Gene3D" id="3.40.1190.20">
    <property type="match status" value="1"/>
</dbReference>
<dbReference type="HAMAP" id="MF_01639">
    <property type="entry name" value="PdxY"/>
    <property type="match status" value="1"/>
</dbReference>
<dbReference type="InterPro" id="IPR013749">
    <property type="entry name" value="PM/HMP-P_kinase-1"/>
</dbReference>
<dbReference type="InterPro" id="IPR004625">
    <property type="entry name" value="PyrdxlKinase"/>
</dbReference>
<dbReference type="InterPro" id="IPR023685">
    <property type="entry name" value="Pyridoxal_kinase_PdxY"/>
</dbReference>
<dbReference type="InterPro" id="IPR029056">
    <property type="entry name" value="Ribokinase-like"/>
</dbReference>
<dbReference type="NCBIfam" id="NF004398">
    <property type="entry name" value="PRK05756.1"/>
    <property type="match status" value="1"/>
</dbReference>
<dbReference type="NCBIfam" id="TIGR00687">
    <property type="entry name" value="pyridox_kin"/>
    <property type="match status" value="1"/>
</dbReference>
<dbReference type="PANTHER" id="PTHR10534">
    <property type="entry name" value="PYRIDOXAL KINASE"/>
    <property type="match status" value="1"/>
</dbReference>
<dbReference type="PANTHER" id="PTHR10534:SF2">
    <property type="entry name" value="PYRIDOXAL KINASE"/>
    <property type="match status" value="1"/>
</dbReference>
<dbReference type="Pfam" id="PF08543">
    <property type="entry name" value="Phos_pyr_kin"/>
    <property type="match status" value="1"/>
</dbReference>
<dbReference type="SUPFAM" id="SSF53613">
    <property type="entry name" value="Ribokinase-like"/>
    <property type="match status" value="1"/>
</dbReference>
<accession>B1JFM7</accession>
<feature type="chain" id="PRO_1000186814" description="Pyridoxal kinase PdxY">
    <location>
        <begin position="1"/>
        <end position="290"/>
    </location>
</feature>
<feature type="binding site" evidence="1">
    <location>
        <position position="12"/>
    </location>
    <ligand>
        <name>substrate</name>
    </ligand>
</feature>
<feature type="binding site" evidence="1">
    <location>
        <begin position="47"/>
        <end position="48"/>
    </location>
    <ligand>
        <name>substrate</name>
    </ligand>
</feature>
<feature type="binding site" evidence="1">
    <location>
        <position position="114"/>
    </location>
    <ligand>
        <name>ATP</name>
        <dbReference type="ChEBI" id="CHEBI:30616"/>
    </ligand>
</feature>
<feature type="binding site" evidence="1">
    <location>
        <position position="151"/>
    </location>
    <ligand>
        <name>ATP</name>
        <dbReference type="ChEBI" id="CHEBI:30616"/>
    </ligand>
</feature>
<feature type="binding site" evidence="1">
    <location>
        <position position="184"/>
    </location>
    <ligand>
        <name>ATP</name>
        <dbReference type="ChEBI" id="CHEBI:30616"/>
    </ligand>
</feature>
<feature type="binding site" evidence="1">
    <location>
        <begin position="211"/>
        <end position="214"/>
    </location>
    <ligand>
        <name>ATP</name>
        <dbReference type="ChEBI" id="CHEBI:30616"/>
    </ligand>
</feature>
<feature type="binding site" evidence="1">
    <location>
        <position position="225"/>
    </location>
    <ligand>
        <name>substrate</name>
    </ligand>
</feature>
<gene>
    <name evidence="1" type="primary">pdxY</name>
    <name type="ordered locus">PputW619_5135</name>
</gene>
<proteinExistence type="inferred from homology"/>
<sequence length="290" mass="31961">MKRTPHLLAIQSHVVFGHAGNSAAVFPMQRIGVNVWPLNTVQFSNHTQYGQWAGEVLAPAQIPALVEGISNIGELGHCDAVLSGYLGSAEQGRAILAGVERIKAVNPKALYLCDPVMGHAEKGCIVPQEVSEFLLDDAVAQADILCPNQLELDSFCGRRAQSLEDCVRMARGLLERGPQVVLVKHLAYPGRCEDMFEMLLVTRDHSWHLRRPLLAFPRQPVGVGDLTSGLFLARVLLGDSWVQAFEYTAAAVHEVLLETQACASYELQLVRAQDRIAYPRVRFEAQRLAF</sequence>
<organism>
    <name type="scientific">Pseudomonas putida (strain W619)</name>
    <dbReference type="NCBI Taxonomy" id="390235"/>
    <lineage>
        <taxon>Bacteria</taxon>
        <taxon>Pseudomonadati</taxon>
        <taxon>Pseudomonadota</taxon>
        <taxon>Gammaproteobacteria</taxon>
        <taxon>Pseudomonadales</taxon>
        <taxon>Pseudomonadaceae</taxon>
        <taxon>Pseudomonas</taxon>
    </lineage>
</organism>
<keyword id="KW-0067">ATP-binding</keyword>
<keyword id="KW-0418">Kinase</keyword>
<keyword id="KW-0460">Magnesium</keyword>
<keyword id="KW-0547">Nucleotide-binding</keyword>
<keyword id="KW-0808">Transferase</keyword>
<reference key="1">
    <citation type="submission" date="2008-02" db="EMBL/GenBank/DDBJ databases">
        <title>Complete sequence of Pseudomonas putida W619.</title>
        <authorList>
            <person name="Copeland A."/>
            <person name="Lucas S."/>
            <person name="Lapidus A."/>
            <person name="Barry K."/>
            <person name="Detter J.C."/>
            <person name="Glavina del Rio T."/>
            <person name="Dalin E."/>
            <person name="Tice H."/>
            <person name="Pitluck S."/>
            <person name="Chain P."/>
            <person name="Malfatti S."/>
            <person name="Shin M."/>
            <person name="Vergez L."/>
            <person name="Schmutz J."/>
            <person name="Larimer F."/>
            <person name="Land M."/>
            <person name="Hauser L."/>
            <person name="Kyrpides N."/>
            <person name="Kim E."/>
            <person name="Taghavi S."/>
            <person name="Vangronsveld D."/>
            <person name="van der Lelie D."/>
            <person name="Richardson P."/>
        </authorList>
    </citation>
    <scope>NUCLEOTIDE SEQUENCE [LARGE SCALE GENOMIC DNA]</scope>
    <source>
        <strain>W619</strain>
    </source>
</reference>
<protein>
    <recommendedName>
        <fullName evidence="1">Pyridoxal kinase PdxY</fullName>
        <shortName evidence="1">PL kinase</shortName>
        <ecNumber evidence="1">2.7.1.35</ecNumber>
    </recommendedName>
</protein>
<comment type="function">
    <text evidence="1">Pyridoxal kinase involved in the salvage pathway of pyridoxal 5'-phosphate (PLP). Catalyzes the phosphorylation of pyridoxal to PLP.</text>
</comment>
<comment type="catalytic activity">
    <reaction evidence="1">
        <text>pyridoxal + ATP = pyridoxal 5'-phosphate + ADP + H(+)</text>
        <dbReference type="Rhea" id="RHEA:10224"/>
        <dbReference type="ChEBI" id="CHEBI:15378"/>
        <dbReference type="ChEBI" id="CHEBI:17310"/>
        <dbReference type="ChEBI" id="CHEBI:30616"/>
        <dbReference type="ChEBI" id="CHEBI:456216"/>
        <dbReference type="ChEBI" id="CHEBI:597326"/>
        <dbReference type="EC" id="2.7.1.35"/>
    </reaction>
</comment>
<comment type="cofactor">
    <cofactor evidence="1">
        <name>Mg(2+)</name>
        <dbReference type="ChEBI" id="CHEBI:18420"/>
    </cofactor>
</comment>
<comment type="pathway">
    <text evidence="1">Cofactor metabolism; pyridoxal 5'-phosphate salvage; pyridoxal 5'-phosphate from pyridoxal: step 1/1.</text>
</comment>
<comment type="subunit">
    <text evidence="1">Homodimer.</text>
</comment>
<comment type="similarity">
    <text evidence="1">Belongs to the pyridoxine kinase family. PdxY subfamily.</text>
</comment>